<organism>
    <name type="scientific">Aspergillus fumigatus (strain ATCC MYA-4609 / CBS 101355 / FGSC A1100 / Af293)</name>
    <name type="common">Neosartorya fumigata</name>
    <dbReference type="NCBI Taxonomy" id="330879"/>
    <lineage>
        <taxon>Eukaryota</taxon>
        <taxon>Fungi</taxon>
        <taxon>Dikarya</taxon>
        <taxon>Ascomycota</taxon>
        <taxon>Pezizomycotina</taxon>
        <taxon>Eurotiomycetes</taxon>
        <taxon>Eurotiomycetidae</taxon>
        <taxon>Eurotiales</taxon>
        <taxon>Aspergillaceae</taxon>
        <taxon>Aspergillus</taxon>
        <taxon>Aspergillus subgen. Fumigati</taxon>
    </lineage>
</organism>
<proteinExistence type="evidence at protein level"/>
<name>PPTA_ASPFU</name>
<sequence>MGSAQNERIPSLTRWYIDTRQLTVTNPSLPLLEALQPSDQEAVKRFYHLRDRHMSLASNLLKYLFIHRSCCIPWNKISISRTPDPHRRPCFIPSPALTEATDEPIPGIEFNVSHQASLVALAGTIIPQSHGASPNPTTVFANPSPSSVPAPSVPQVGIDITCVDERHARTSSAPSTRDQLAGYVDIFAEVFSSRELDTIKNLGGRFPADAQDGEAVEYGLRLFYTYWALKEAYIKMTGEALLAPWLRELEFTDVIAPEPAPAPGQGSAENWGEPYTGVKIWLYGKRVEDVRIEVVAFETGYIFATAARGAGLGAESRPLSRDAGVAVSVDRWMHMEKIDIDRDIAPCATGVCQCTKKQP</sequence>
<keyword id="KW-1185">Reference proteome</keyword>
<keyword id="KW-0808">Transferase</keyword>
<keyword id="KW-0843">Virulence</keyword>
<comment type="function">
    <text evidence="1 2 6">Acyl-carrier-protein synthase that transfers the 4'-phosphopantetheine moiety from coenzyme A to a Ser of an acyl-carrier-protein (PubMed:12664133, PubMed:21195204, PubMed:28720735). The 4'-phosphopantetheine (4'-PPT) portion of CoA provides the essential prosthetic group for a number of carrier proteins and multi-domain enzymes, priming them for the acceptance of acyl building blocks in fatty acid synthesis and many aspects of secondary metabolism mediated by polyketide synthases (PKSs) and non-ribosomal peptide synthetases (NRPSs) (PubMed:21195204, PubMed:28720735). PptA is able to transfer the cofactor to a broad range of enzymes with acyl- or peptidyl-carrier protein domains and activates target enzymes involved in the synthesis of lysine, but also secondary metabolites including gliotoxin, fumigaclavine C, fumiquinazole A, fumiquinazoline C, pyripyroprene A, fumagillin, the siderophores triacetylfusarinine C (TAFC) and ferricrocin (FC), and dihydroxy naphthalene (DHN)-melanin (PubMed:21195204, PubMed:28720735). Plays an essential role in virulence (PubMed:28720735).</text>
</comment>
<comment type="catalytic activity">
    <reaction evidence="1 2">
        <text>apo-[ACP] + CoA = holo-[ACP] + adenosine 3',5'-bisphosphate + H(+)</text>
        <dbReference type="Rhea" id="RHEA:12068"/>
        <dbReference type="Rhea" id="RHEA-COMP:9685"/>
        <dbReference type="Rhea" id="RHEA-COMP:9690"/>
        <dbReference type="ChEBI" id="CHEBI:15378"/>
        <dbReference type="ChEBI" id="CHEBI:29999"/>
        <dbReference type="ChEBI" id="CHEBI:57287"/>
        <dbReference type="ChEBI" id="CHEBI:58343"/>
        <dbReference type="ChEBI" id="CHEBI:64479"/>
        <dbReference type="EC" id="2.7.8.7"/>
    </reaction>
</comment>
<comment type="activity regulation">
    <text evidence="2">Activity is inhibited bythe antifunfal copmpounds PD 404,182, 6-nitroso-1,2-benzopyrone, and calmidazolium chloride with IC(50) values of 3.9 uM, 35.2 uM, and 19.2 uM, respectively (PubMed:28720735).</text>
</comment>
<comment type="disruption phenotype">
    <text evidence="1 2">Leads to the loss of the green conidial pigment and decreased viability of conidia (PubMed:21195204). Impairs virulence in both insect and murine infection models (PubMed:28720735).</text>
</comment>
<comment type="biotechnology">
    <text evidence="2">PptA is a druggable target in Aspergillus species that can be targeted in a selective way (PubMed:28720735). Its combined role in both primary and secondary metabolism, encompassing multiple virulence determinants, makes it a very promising antifungal drug target candidate (PubMed:28720735).</text>
</comment>
<comment type="similarity">
    <text evidence="5">Belongs to the P-Pant transferase superfamily.</text>
</comment>
<reference key="1">
    <citation type="journal article" date="2003" name="Curr. Genet.">
        <title>The npgA/cfwA gene encodes a putative 4'-phosphopantetheinyl transferase which is essential for penicillin biosynthesis in Aspergillus nidulans.</title>
        <authorList>
            <person name="Keszenman-Pereyra D."/>
            <person name="Lawrence S."/>
            <person name="Twfieg M.E."/>
            <person name="Price J."/>
            <person name="Turner G."/>
        </authorList>
    </citation>
    <scope>NUCLEOTIDE SEQUENCE [GENOMIC DNA]</scope>
    <scope>FUNCTION</scope>
</reference>
<reference key="2">
    <citation type="submission" date="2005-06" db="EMBL/GenBank/DDBJ databases">
        <title>The gene pptA, homolog of npgA, is not an essential gene in Aspergillus fumigatus.</title>
        <authorList>
            <person name="Keszenman-Pereyra D."/>
            <person name="Zucchi T.D."/>
            <person name="Haas H."/>
            <person name="Turner G."/>
        </authorList>
    </citation>
    <scope>NUCLEOTIDE SEQUENCE [GENOMIC DNA]</scope>
</reference>
<reference key="3">
    <citation type="journal article" date="2005" name="Nature">
        <title>Genomic sequence of the pathogenic and allergenic filamentous fungus Aspergillus fumigatus.</title>
        <authorList>
            <person name="Nierman W.C."/>
            <person name="Pain A."/>
            <person name="Anderson M.J."/>
            <person name="Wortman J.R."/>
            <person name="Kim H.S."/>
            <person name="Arroyo J."/>
            <person name="Berriman M."/>
            <person name="Abe K."/>
            <person name="Archer D.B."/>
            <person name="Bermejo C."/>
            <person name="Bennett J.W."/>
            <person name="Bowyer P."/>
            <person name="Chen D."/>
            <person name="Collins M."/>
            <person name="Coulsen R."/>
            <person name="Davies R."/>
            <person name="Dyer P.S."/>
            <person name="Farman M.L."/>
            <person name="Fedorova N."/>
            <person name="Fedorova N.D."/>
            <person name="Feldblyum T.V."/>
            <person name="Fischer R."/>
            <person name="Fosker N."/>
            <person name="Fraser A."/>
            <person name="Garcia J.L."/>
            <person name="Garcia M.J."/>
            <person name="Goble A."/>
            <person name="Goldman G.H."/>
            <person name="Gomi K."/>
            <person name="Griffith-Jones S."/>
            <person name="Gwilliam R."/>
            <person name="Haas B.J."/>
            <person name="Haas H."/>
            <person name="Harris D.E."/>
            <person name="Horiuchi H."/>
            <person name="Huang J."/>
            <person name="Humphray S."/>
            <person name="Jimenez J."/>
            <person name="Keller N."/>
            <person name="Khouri H."/>
            <person name="Kitamoto K."/>
            <person name="Kobayashi T."/>
            <person name="Konzack S."/>
            <person name="Kulkarni R."/>
            <person name="Kumagai T."/>
            <person name="Lafton A."/>
            <person name="Latge J.-P."/>
            <person name="Li W."/>
            <person name="Lord A."/>
            <person name="Lu C."/>
            <person name="Majoros W.H."/>
            <person name="May G.S."/>
            <person name="Miller B.L."/>
            <person name="Mohamoud Y."/>
            <person name="Molina M."/>
            <person name="Monod M."/>
            <person name="Mouyna I."/>
            <person name="Mulligan S."/>
            <person name="Murphy L.D."/>
            <person name="O'Neil S."/>
            <person name="Paulsen I."/>
            <person name="Penalva M.A."/>
            <person name="Pertea M."/>
            <person name="Price C."/>
            <person name="Pritchard B.L."/>
            <person name="Quail M.A."/>
            <person name="Rabbinowitsch E."/>
            <person name="Rawlins N."/>
            <person name="Rajandream M.A."/>
            <person name="Reichard U."/>
            <person name="Renauld H."/>
            <person name="Robson G.D."/>
            <person name="Rodriguez de Cordoba S."/>
            <person name="Rodriguez-Pena J.M."/>
            <person name="Ronning C.M."/>
            <person name="Rutter S."/>
            <person name="Salzberg S.L."/>
            <person name="Sanchez M."/>
            <person name="Sanchez-Ferrero J.C."/>
            <person name="Saunders D."/>
            <person name="Seeger K."/>
            <person name="Squares R."/>
            <person name="Squares S."/>
            <person name="Takeuchi M."/>
            <person name="Tekaia F."/>
            <person name="Turner G."/>
            <person name="Vazquez de Aldana C.R."/>
            <person name="Weidman J."/>
            <person name="White O."/>
            <person name="Woodward J.R."/>
            <person name="Yu J.-H."/>
            <person name="Fraser C.M."/>
            <person name="Galagan J.E."/>
            <person name="Asai K."/>
            <person name="Machida M."/>
            <person name="Hall N."/>
            <person name="Barrell B.G."/>
            <person name="Denning D.W."/>
        </authorList>
    </citation>
    <scope>NUCLEOTIDE SEQUENCE [LARGE SCALE GENOMIC DNA]</scope>
    <source>
        <strain>ATCC MYA-4609 / CBS 101355 / FGSC A1100 / Af293</strain>
    </source>
</reference>
<reference key="4">
    <citation type="journal article" date="2011" name="Fungal Genet. Biol.">
        <title>Functional analysis of a mitochondrial phosphopantetheinyl transferase (PPTase) gene pptB in Aspergillus fumigatus.</title>
        <authorList>
            <person name="Allen G."/>
            <person name="Bromley M."/>
            <person name="Kaye S.J."/>
            <person name="Keszenman-Pereyra D."/>
            <person name="Zucchi T.D."/>
            <person name="Price J."/>
            <person name="Birch M."/>
            <person name="Oliver J.D."/>
            <person name="Turner G."/>
        </authorList>
    </citation>
    <scope>FUNCTION</scope>
    <scope>DISRUPTION PHENOTYPE</scope>
</reference>
<reference key="5">
    <citation type="journal article" date="2017" name="MBio">
        <title>A nonredundant phosphopantetheinyl transferase, PptA, is a novel antifungal target that directs secondary metabolite, siderophore, and lysine biosynthesis in Aspergillus fumigatus and is critical for pathogenicity.</title>
        <authorList>
            <person name="Johns A."/>
            <person name="Scharf D.H."/>
            <person name="Gsaller F."/>
            <person name="Schmidt H."/>
            <person name="Heinekamp T."/>
            <person name="Strassburger M."/>
            <person name="Oliver J.D."/>
            <person name="Birch M."/>
            <person name="Beckmann N."/>
            <person name="Dobb K.S."/>
            <person name="Gilsenan J."/>
            <person name="Rash B."/>
            <person name="Bignell E."/>
            <person name="Brakhage A.A."/>
            <person name="Bromley M.J."/>
        </authorList>
    </citation>
    <scope>FUNCTION</scope>
    <scope>DISRUPTION PHENOTYPE</scope>
    <scope>CATALYTIC ACTIVITY</scope>
    <scope>ACTIVITY REGULATION</scope>
    <scope>BIOTECHNOLOGY</scope>
</reference>
<protein>
    <recommendedName>
        <fullName evidence="3">4'-phosphopantetheinyl transferase A</fullName>
        <shortName evidence="3">PPTase A</shortName>
        <ecNumber evidence="1 2">2.7.8.7</ecNumber>
    </recommendedName>
    <alternativeName>
        <fullName evidence="4">Acyl-carrier-protein synthase pptA</fullName>
    </alternativeName>
    <alternativeName>
        <fullName evidence="4">Phosphopantetheine:protein transferase pptA</fullName>
    </alternativeName>
</protein>
<feature type="chain" id="PRO_0000444447" description="4'-phosphopantetheinyl transferase A">
    <location>
        <begin position="1"/>
        <end position="359"/>
    </location>
</feature>
<gene>
    <name evidence="4" type="primary">pptA</name>
    <name type="ORF">AFUA_2G08590</name>
</gene>
<evidence type="ECO:0000269" key="1">
    <source>
    </source>
</evidence>
<evidence type="ECO:0000269" key="2">
    <source>
    </source>
</evidence>
<evidence type="ECO:0000303" key="3">
    <source>
    </source>
</evidence>
<evidence type="ECO:0000303" key="4">
    <source>
    </source>
</evidence>
<evidence type="ECO:0000305" key="5"/>
<evidence type="ECO:0000305" key="6">
    <source>
    </source>
</evidence>
<accession>Q4X1W0</accession>
<accession>E9R469</accession>
<accession>Q4FCS5</accession>
<dbReference type="EC" id="2.7.8.7" evidence="1 2"/>
<dbReference type="EMBL" id="DQ092864">
    <property type="protein sequence ID" value="AAY99391.1"/>
    <property type="molecule type" value="Genomic_DNA"/>
</dbReference>
<dbReference type="EMBL" id="AAHF01000001">
    <property type="protein sequence ID" value="EAL93155.1"/>
    <property type="molecule type" value="Genomic_DNA"/>
</dbReference>
<dbReference type="RefSeq" id="XP_755193.1">
    <property type="nucleotide sequence ID" value="XM_750100.1"/>
</dbReference>
<dbReference type="SMR" id="Q4X1W0"/>
<dbReference type="STRING" id="330879.Q4X1W0"/>
<dbReference type="EnsemblFungi" id="EAL93155">
    <property type="protein sequence ID" value="EAL93155"/>
    <property type="gene ID" value="AFUA_2G08590"/>
</dbReference>
<dbReference type="GeneID" id="3513464"/>
<dbReference type="KEGG" id="afm:AFUA_2G08590"/>
<dbReference type="VEuPathDB" id="FungiDB:Afu2g08590"/>
<dbReference type="eggNOG" id="KOG0945">
    <property type="taxonomic scope" value="Eukaryota"/>
</dbReference>
<dbReference type="HOGENOM" id="CLU_031126_1_1_1"/>
<dbReference type="InParanoid" id="Q4X1W0"/>
<dbReference type="OMA" id="HRTCRIP"/>
<dbReference type="OrthoDB" id="26719at2759"/>
<dbReference type="Proteomes" id="UP000002530">
    <property type="component" value="Chromosome 2"/>
</dbReference>
<dbReference type="GO" id="GO:0005829">
    <property type="term" value="C:cytosol"/>
    <property type="evidence" value="ECO:0000318"/>
    <property type="project" value="GO_Central"/>
</dbReference>
<dbReference type="GO" id="GO:0008897">
    <property type="term" value="F:holo-[acyl-carrier-protein] synthase activity"/>
    <property type="evidence" value="ECO:0000314"/>
    <property type="project" value="AspGD"/>
</dbReference>
<dbReference type="GO" id="GO:0000287">
    <property type="term" value="F:magnesium ion binding"/>
    <property type="evidence" value="ECO:0007669"/>
    <property type="project" value="InterPro"/>
</dbReference>
<dbReference type="GO" id="GO:0140614">
    <property type="term" value="P:1,8-dihydroxynaphthalene-melanin biosynthetic process"/>
    <property type="evidence" value="ECO:0000315"/>
    <property type="project" value="PHI-base"/>
</dbReference>
<dbReference type="GO" id="GO:1902086">
    <property type="term" value="P:fumagillin biosynthetic process"/>
    <property type="evidence" value="ECO:0000315"/>
    <property type="project" value="PHI-base"/>
</dbReference>
<dbReference type="GO" id="GO:1900809">
    <property type="term" value="P:fumigaclavine C biosynthetic process"/>
    <property type="evidence" value="ECO:0000315"/>
    <property type="project" value="PHI-base"/>
</dbReference>
<dbReference type="GO" id="GO:1900781">
    <property type="term" value="P:fumiquinazoline C biosynthetic process"/>
    <property type="evidence" value="ECO:0000315"/>
    <property type="project" value="PHI-base"/>
</dbReference>
<dbReference type="GO" id="GO:2001310">
    <property type="term" value="P:gliotoxin biosynthetic process"/>
    <property type="evidence" value="ECO:0000315"/>
    <property type="project" value="PHI-base"/>
</dbReference>
<dbReference type="GO" id="GO:0009085">
    <property type="term" value="P:lysine biosynthetic process"/>
    <property type="evidence" value="ECO:0000315"/>
    <property type="project" value="PHI-base"/>
</dbReference>
<dbReference type="GO" id="GO:0019878">
    <property type="term" value="P:lysine biosynthetic process via aminoadipic acid"/>
    <property type="evidence" value="ECO:0000318"/>
    <property type="project" value="GO_Central"/>
</dbReference>
<dbReference type="GO" id="GO:1900551">
    <property type="term" value="P:N',N'',N'''-triacetylfusarinine C biosynthetic process"/>
    <property type="evidence" value="ECO:0000315"/>
    <property type="project" value="PHI-base"/>
</dbReference>
<dbReference type="GO" id="GO:0043324">
    <property type="term" value="P:pigment metabolic process involved in developmental pigmentation"/>
    <property type="evidence" value="ECO:0000315"/>
    <property type="project" value="AspGD"/>
</dbReference>
<dbReference type="FunFam" id="3.90.470.20:FF:000023">
    <property type="entry name" value="L-aminoadipate-semialdehyde dehydrogenase-phosphopantetheinyl transferase"/>
    <property type="match status" value="1"/>
</dbReference>
<dbReference type="Gene3D" id="3.90.470.20">
    <property type="entry name" value="4'-phosphopantetheinyl transferase domain"/>
    <property type="match status" value="2"/>
</dbReference>
<dbReference type="InterPro" id="IPR008278">
    <property type="entry name" value="4-PPantetheinyl_Trfase_dom"/>
</dbReference>
<dbReference type="InterPro" id="IPR037143">
    <property type="entry name" value="4-PPantetheinyl_Trfase_dom_sf"/>
</dbReference>
<dbReference type="InterPro" id="IPR055066">
    <property type="entry name" value="AASDHPPT_N"/>
</dbReference>
<dbReference type="InterPro" id="IPR050559">
    <property type="entry name" value="P-Pant_transferase_sf"/>
</dbReference>
<dbReference type="PANTHER" id="PTHR12215:SF10">
    <property type="entry name" value="L-AMINOADIPATE-SEMIALDEHYDE DEHYDROGENASE-PHOSPHOPANTETHEINYL TRANSFERASE"/>
    <property type="match status" value="1"/>
</dbReference>
<dbReference type="PANTHER" id="PTHR12215">
    <property type="entry name" value="PHOSPHOPANTETHEINE TRANSFERASE"/>
    <property type="match status" value="1"/>
</dbReference>
<dbReference type="Pfam" id="PF22624">
    <property type="entry name" value="AASDHPPT_N"/>
    <property type="match status" value="1"/>
</dbReference>
<dbReference type="Pfam" id="PF01648">
    <property type="entry name" value="ACPS"/>
    <property type="match status" value="1"/>
</dbReference>
<dbReference type="SUPFAM" id="SSF56214">
    <property type="entry name" value="4'-phosphopantetheinyl transferase"/>
    <property type="match status" value="2"/>
</dbReference>